<dbReference type="EMBL" id="L19338">
    <property type="protein sequence ID" value="AAA75424.1"/>
    <property type="molecule type" value="Genomic_DNA"/>
</dbReference>
<dbReference type="EMBL" id="AE006468">
    <property type="protein sequence ID" value="AAL19506.1"/>
    <property type="molecule type" value="Genomic_DNA"/>
</dbReference>
<dbReference type="RefSeq" id="NP_459547.1">
    <property type="nucleotide sequence ID" value="NC_003197.2"/>
</dbReference>
<dbReference type="RefSeq" id="WP_000944156.1">
    <property type="nucleotide sequence ID" value="NC_003197.2"/>
</dbReference>
<dbReference type="SMR" id="P37928"/>
<dbReference type="STRING" id="99287.STM0552"/>
<dbReference type="PaxDb" id="99287-STM0552"/>
<dbReference type="GeneID" id="1252072"/>
<dbReference type="KEGG" id="stm:STM0552"/>
<dbReference type="PATRIC" id="fig|99287.12.peg.585"/>
<dbReference type="HOGENOM" id="CLU_1364714_0_0_6"/>
<dbReference type="OMA" id="ACTIAGM"/>
<dbReference type="BioCyc" id="SENT99287:STM0552-MONOMER"/>
<dbReference type="Proteomes" id="UP000001014">
    <property type="component" value="Chromosome"/>
</dbReference>
<dbReference type="GO" id="GO:0009289">
    <property type="term" value="C:pilus"/>
    <property type="evidence" value="ECO:0007669"/>
    <property type="project" value="UniProtKB-SubCell"/>
</dbReference>
<dbReference type="GO" id="GO:0003677">
    <property type="term" value="F:DNA binding"/>
    <property type="evidence" value="ECO:0007669"/>
    <property type="project" value="UniProtKB-KW"/>
</dbReference>
<dbReference type="GO" id="GO:0006355">
    <property type="term" value="P:regulation of DNA-templated transcription"/>
    <property type="evidence" value="ECO:0007669"/>
    <property type="project" value="InterPro"/>
</dbReference>
<dbReference type="CDD" id="cd06170">
    <property type="entry name" value="LuxR_C_like"/>
    <property type="match status" value="1"/>
</dbReference>
<dbReference type="Gene3D" id="1.10.10.10">
    <property type="entry name" value="Winged helix-like DNA-binding domain superfamily/Winged helix DNA-binding domain"/>
    <property type="match status" value="1"/>
</dbReference>
<dbReference type="InterPro" id="IPR016032">
    <property type="entry name" value="Sig_transdc_resp-reg_C-effctor"/>
</dbReference>
<dbReference type="InterPro" id="IPR000792">
    <property type="entry name" value="Tscrpt_reg_LuxR_C"/>
</dbReference>
<dbReference type="InterPro" id="IPR036388">
    <property type="entry name" value="WH-like_DNA-bd_sf"/>
</dbReference>
<dbReference type="NCBIfam" id="NF011748">
    <property type="entry name" value="PRK15201.1"/>
    <property type="match status" value="1"/>
</dbReference>
<dbReference type="Pfam" id="PF00196">
    <property type="entry name" value="GerE"/>
    <property type="match status" value="1"/>
</dbReference>
<dbReference type="SMART" id="SM00421">
    <property type="entry name" value="HTH_LUXR"/>
    <property type="match status" value="1"/>
</dbReference>
<dbReference type="SUPFAM" id="SSF46894">
    <property type="entry name" value="C-terminal effector domain of the bipartite response regulators"/>
    <property type="match status" value="1"/>
</dbReference>
<dbReference type="PROSITE" id="PS50043">
    <property type="entry name" value="HTH_LUXR_2"/>
    <property type="match status" value="1"/>
</dbReference>
<accession>P37928</accession>
<organism>
    <name type="scientific">Salmonella typhimurium (strain LT2 / SGSC1412 / ATCC 700720)</name>
    <dbReference type="NCBI Taxonomy" id="99287"/>
    <lineage>
        <taxon>Bacteria</taxon>
        <taxon>Pseudomonadati</taxon>
        <taxon>Pseudomonadota</taxon>
        <taxon>Gammaproteobacteria</taxon>
        <taxon>Enterobacterales</taxon>
        <taxon>Enterobacteriaceae</taxon>
        <taxon>Salmonella</taxon>
    </lineage>
</organism>
<reference key="1">
    <citation type="submission" date="1993-06" db="EMBL/GenBank/DDBJ databases">
        <authorList>
            <person name="Swenson D.L."/>
            <person name="Clegg S."/>
        </authorList>
    </citation>
    <scope>NUCLEOTIDE SEQUENCE [GENOMIC DNA]</scope>
</reference>
<reference key="2">
    <citation type="journal article" date="2001" name="Nature">
        <title>Complete genome sequence of Salmonella enterica serovar Typhimurium LT2.</title>
        <authorList>
            <person name="McClelland M."/>
            <person name="Sanderson K.E."/>
            <person name="Spieth J."/>
            <person name="Clifton S.W."/>
            <person name="Latreille P."/>
            <person name="Courtney L."/>
            <person name="Porwollik S."/>
            <person name="Ali J."/>
            <person name="Dante M."/>
            <person name="Du F."/>
            <person name="Hou S."/>
            <person name="Layman D."/>
            <person name="Leonard S."/>
            <person name="Nguyen C."/>
            <person name="Scott K."/>
            <person name="Holmes A."/>
            <person name="Grewal N."/>
            <person name="Mulvaney E."/>
            <person name="Ryan E."/>
            <person name="Sun H."/>
            <person name="Florea L."/>
            <person name="Miller W."/>
            <person name="Stoneking T."/>
            <person name="Nhan M."/>
            <person name="Waterston R."/>
            <person name="Wilson R.K."/>
        </authorList>
    </citation>
    <scope>NUCLEOTIDE SEQUENCE [LARGE SCALE GENOMIC DNA]</scope>
    <source>
        <strain>LT2 / SGSC1412 / ATCC 700720</strain>
    </source>
</reference>
<feature type="chain" id="PRO_0000184154" description="Fimbriae W protein">
    <location>
        <begin position="1"/>
        <end position="198"/>
    </location>
</feature>
<feature type="domain" description="HTH luxR-type" evidence="1">
    <location>
        <begin position="127"/>
        <end position="192"/>
    </location>
</feature>
<sequence>MLRIAIKEQNSHFEHGLKIIMTRLANQWQQKIDFLPPEEIDNADIAFLALDDDWFSAGCYQIPMHTQHQLRAIICNKCDKEKLMFRPCLYMLPHIYREDDVEEITRKMILILHKRALRHSVPSGICHYCTTRHFSVTERHLLKLIASGYHLSETAALLSLSEEQTKSLRRSIMRKLHVKTEQQFLKYIRVNLHFLLSK</sequence>
<name>FIMW_SALTY</name>
<gene>
    <name type="primary">fimW</name>
    <name type="ordered locus">STM0552</name>
</gene>
<comment type="subcellular location">
    <subcellularLocation>
        <location evidence="2">Fimbrium</location>
    </subcellularLocation>
</comment>
<keyword id="KW-0238">DNA-binding</keyword>
<keyword id="KW-0281">Fimbrium</keyword>
<keyword id="KW-1185">Reference proteome</keyword>
<keyword id="KW-0804">Transcription</keyword>
<keyword id="KW-0805">Transcription regulation</keyword>
<proteinExistence type="predicted"/>
<protein>
    <recommendedName>
        <fullName>Fimbriae W protein</fullName>
    </recommendedName>
</protein>
<evidence type="ECO:0000255" key="1">
    <source>
        <dbReference type="PROSITE-ProRule" id="PRU00411"/>
    </source>
</evidence>
<evidence type="ECO:0000305" key="2"/>